<accession>Q9C5C2</accession>
<accession>Q0WWL9</accession>
<accession>Q3E943</accession>
<accession>Q42595</accession>
<accession>Q56WQ3</accession>
<accession>Q56ZB8</accession>
<accession>Q8H7E3</accession>
<accession>Q9ASV0</accession>
<gene>
    <name evidence="3" type="primary">TGG2</name>
    <name evidence="14" type="synonym">BGLU37</name>
    <name evidence="16" type="ordered locus">At5g25980</name>
    <name evidence="17" type="ORF">T1N24.18</name>
</gene>
<reference key="1">
    <citation type="journal article" date="1995" name="Plant Mol. Biol.">
        <title>The myrosinase gene family in Arabidopsis thaliana: gene organization, expression and evolution.</title>
        <authorList>
            <person name="Xue J."/>
            <person name="Joergensen M."/>
            <person name="Pihlgren U."/>
            <person name="Rask L."/>
        </authorList>
    </citation>
    <scope>NUCLEOTIDE SEQUENCE [GENOMIC DNA]</scope>
    <source>
        <strain>cv. Columbia</strain>
        <tissue>Leaf</tissue>
    </source>
</reference>
<reference key="2">
    <citation type="journal article" date="2000" name="Nature">
        <title>Sequence and analysis of chromosome 5 of the plant Arabidopsis thaliana.</title>
        <authorList>
            <person name="Tabata S."/>
            <person name="Kaneko T."/>
            <person name="Nakamura Y."/>
            <person name="Kotani H."/>
            <person name="Kato T."/>
            <person name="Asamizu E."/>
            <person name="Miyajima N."/>
            <person name="Sasamoto S."/>
            <person name="Kimura T."/>
            <person name="Hosouchi T."/>
            <person name="Kawashima K."/>
            <person name="Kohara M."/>
            <person name="Matsumoto M."/>
            <person name="Matsuno A."/>
            <person name="Muraki A."/>
            <person name="Nakayama S."/>
            <person name="Nakazaki N."/>
            <person name="Naruo K."/>
            <person name="Okumura S."/>
            <person name="Shinpo S."/>
            <person name="Takeuchi C."/>
            <person name="Wada T."/>
            <person name="Watanabe A."/>
            <person name="Yamada M."/>
            <person name="Yasuda M."/>
            <person name="Sato S."/>
            <person name="de la Bastide M."/>
            <person name="Huang E."/>
            <person name="Spiegel L."/>
            <person name="Gnoj L."/>
            <person name="O'Shaughnessy A."/>
            <person name="Preston R."/>
            <person name="Habermann K."/>
            <person name="Murray J."/>
            <person name="Johnson D."/>
            <person name="Rohlfing T."/>
            <person name="Nelson J."/>
            <person name="Stoneking T."/>
            <person name="Pepin K."/>
            <person name="Spieth J."/>
            <person name="Sekhon M."/>
            <person name="Armstrong J."/>
            <person name="Becker M."/>
            <person name="Belter E."/>
            <person name="Cordum H."/>
            <person name="Cordes M."/>
            <person name="Courtney L."/>
            <person name="Courtney W."/>
            <person name="Dante M."/>
            <person name="Du H."/>
            <person name="Edwards J."/>
            <person name="Fryman J."/>
            <person name="Haakensen B."/>
            <person name="Lamar E."/>
            <person name="Latreille P."/>
            <person name="Leonard S."/>
            <person name="Meyer R."/>
            <person name="Mulvaney E."/>
            <person name="Ozersky P."/>
            <person name="Riley A."/>
            <person name="Strowmatt C."/>
            <person name="Wagner-McPherson C."/>
            <person name="Wollam A."/>
            <person name="Yoakum M."/>
            <person name="Bell M."/>
            <person name="Dedhia N."/>
            <person name="Parnell L."/>
            <person name="Shah R."/>
            <person name="Rodriguez M."/>
            <person name="Hoon See L."/>
            <person name="Vil D."/>
            <person name="Baker J."/>
            <person name="Kirchoff K."/>
            <person name="Toth K."/>
            <person name="King L."/>
            <person name="Bahret A."/>
            <person name="Miller B."/>
            <person name="Marra M.A."/>
            <person name="Martienssen R."/>
            <person name="McCombie W.R."/>
            <person name="Wilson R.K."/>
            <person name="Murphy G."/>
            <person name="Bancroft I."/>
            <person name="Volckaert G."/>
            <person name="Wambutt R."/>
            <person name="Duesterhoeft A."/>
            <person name="Stiekema W."/>
            <person name="Pohl T."/>
            <person name="Entian K.-D."/>
            <person name="Terryn N."/>
            <person name="Hartley N."/>
            <person name="Bent E."/>
            <person name="Johnson S."/>
            <person name="Langham S.-A."/>
            <person name="McCullagh B."/>
            <person name="Robben J."/>
            <person name="Grymonprez B."/>
            <person name="Zimmermann W."/>
            <person name="Ramsperger U."/>
            <person name="Wedler H."/>
            <person name="Balke K."/>
            <person name="Wedler E."/>
            <person name="Peters S."/>
            <person name="van Staveren M."/>
            <person name="Dirkse W."/>
            <person name="Mooijman P."/>
            <person name="Klein Lankhorst R."/>
            <person name="Weitzenegger T."/>
            <person name="Bothe G."/>
            <person name="Rose M."/>
            <person name="Hauf J."/>
            <person name="Berneiser S."/>
            <person name="Hempel S."/>
            <person name="Feldpausch M."/>
            <person name="Lamberth S."/>
            <person name="Villarroel R."/>
            <person name="Gielen J."/>
            <person name="Ardiles W."/>
            <person name="Bents O."/>
            <person name="Lemcke K."/>
            <person name="Kolesov G."/>
            <person name="Mayer K.F.X."/>
            <person name="Rudd S."/>
            <person name="Schoof H."/>
            <person name="Schueller C."/>
            <person name="Zaccaria P."/>
            <person name="Mewes H.-W."/>
            <person name="Bevan M."/>
            <person name="Fransz P.F."/>
        </authorList>
    </citation>
    <scope>NUCLEOTIDE SEQUENCE [LARGE SCALE GENOMIC DNA]</scope>
    <source>
        <strain>cv. Columbia</strain>
    </source>
</reference>
<reference key="3">
    <citation type="journal article" date="2017" name="Plant J.">
        <title>Araport11: a complete reannotation of the Arabidopsis thaliana reference genome.</title>
        <authorList>
            <person name="Cheng C.Y."/>
            <person name="Krishnakumar V."/>
            <person name="Chan A.P."/>
            <person name="Thibaud-Nissen F."/>
            <person name="Schobel S."/>
            <person name="Town C.D."/>
        </authorList>
    </citation>
    <scope>GENOME REANNOTATION</scope>
    <source>
        <strain>cv. Columbia</strain>
    </source>
</reference>
<reference key="4">
    <citation type="journal article" date="2003" name="Science">
        <title>Empirical analysis of transcriptional activity in the Arabidopsis genome.</title>
        <authorList>
            <person name="Yamada K."/>
            <person name="Lim J."/>
            <person name="Dale J.M."/>
            <person name="Chen H."/>
            <person name="Shinn P."/>
            <person name="Palm C.J."/>
            <person name="Southwick A.M."/>
            <person name="Wu H.C."/>
            <person name="Kim C.J."/>
            <person name="Nguyen M."/>
            <person name="Pham P.K."/>
            <person name="Cheuk R.F."/>
            <person name="Karlin-Newmann G."/>
            <person name="Liu S.X."/>
            <person name="Lam B."/>
            <person name="Sakano H."/>
            <person name="Wu T."/>
            <person name="Yu G."/>
            <person name="Miranda M."/>
            <person name="Quach H.L."/>
            <person name="Tripp M."/>
            <person name="Chang C.H."/>
            <person name="Lee J.M."/>
            <person name="Toriumi M.J."/>
            <person name="Chan M.M."/>
            <person name="Tang C.C."/>
            <person name="Onodera C.S."/>
            <person name="Deng J.M."/>
            <person name="Akiyama K."/>
            <person name="Ansari Y."/>
            <person name="Arakawa T."/>
            <person name="Banh J."/>
            <person name="Banno F."/>
            <person name="Bowser L."/>
            <person name="Brooks S.Y."/>
            <person name="Carninci P."/>
            <person name="Chao Q."/>
            <person name="Choy N."/>
            <person name="Enju A."/>
            <person name="Goldsmith A.D."/>
            <person name="Gurjal M."/>
            <person name="Hansen N.F."/>
            <person name="Hayashizaki Y."/>
            <person name="Johnson-Hopson C."/>
            <person name="Hsuan V.W."/>
            <person name="Iida K."/>
            <person name="Karnes M."/>
            <person name="Khan S."/>
            <person name="Koesema E."/>
            <person name="Ishida J."/>
            <person name="Jiang P.X."/>
            <person name="Jones T."/>
            <person name="Kawai J."/>
            <person name="Kamiya A."/>
            <person name="Meyers C."/>
            <person name="Nakajima M."/>
            <person name="Narusaka M."/>
            <person name="Seki M."/>
            <person name="Sakurai T."/>
            <person name="Satou M."/>
            <person name="Tamse R."/>
            <person name="Vaysberg M."/>
            <person name="Wallender E.K."/>
            <person name="Wong C."/>
            <person name="Yamamura Y."/>
            <person name="Yuan S."/>
            <person name="Shinozaki K."/>
            <person name="Davis R.W."/>
            <person name="Theologis A."/>
            <person name="Ecker J.R."/>
        </authorList>
    </citation>
    <scope>NUCLEOTIDE SEQUENCE [LARGE SCALE MRNA] (ISOFORM 1)</scope>
    <source>
        <strain>cv. Columbia</strain>
    </source>
</reference>
<reference key="5">
    <citation type="submission" date="2006-07" db="EMBL/GenBank/DDBJ databases">
        <title>Large-scale analysis of RIKEN Arabidopsis full-length (RAFL) cDNAs.</title>
        <authorList>
            <person name="Totoki Y."/>
            <person name="Seki M."/>
            <person name="Ishida J."/>
            <person name="Nakajima M."/>
            <person name="Enju A."/>
            <person name="Kamiya A."/>
            <person name="Narusaka M."/>
            <person name="Shin-i T."/>
            <person name="Nakagawa M."/>
            <person name="Sakamoto N."/>
            <person name="Oishi K."/>
            <person name="Kohara Y."/>
            <person name="Kobayashi M."/>
            <person name="Toyoda A."/>
            <person name="Sakaki Y."/>
            <person name="Sakurai T."/>
            <person name="Iida K."/>
            <person name="Akiyama K."/>
            <person name="Satou M."/>
            <person name="Toyoda T."/>
            <person name="Konagaya A."/>
            <person name="Carninci P."/>
            <person name="Kawai J."/>
            <person name="Hayashizaki Y."/>
            <person name="Shinozaki K."/>
        </authorList>
    </citation>
    <scope>NUCLEOTIDE SEQUENCE [LARGE SCALE MRNA] (ISOFORM 1)</scope>
    <source>
        <strain>cv. Columbia</strain>
    </source>
</reference>
<reference key="6">
    <citation type="submission" date="1998-08" db="EMBL/GenBank/DDBJ databases">
        <title>Signal peptide selection derived cDNAs from Arabidopsis thaliana leaves and guard cells.</title>
        <authorList>
            <person name="Stracke R."/>
            <person name="Palme K."/>
        </authorList>
    </citation>
    <scope>NUCLEOTIDE SEQUENCE [MRNA] OF 6-208</scope>
</reference>
<reference key="7">
    <citation type="journal article" date="2004" name="Plant Mol. Biol.">
        <title>Functional genomic analysis of Arabidopsis thaliana glycoside hydrolase family 1.</title>
        <authorList>
            <person name="Xu Z."/>
            <person name="Escamilla-Trevino L.L."/>
            <person name="Zeng L."/>
            <person name="Lalgondar M."/>
            <person name="Bevan D.R."/>
            <person name="Winkel B.S.J."/>
            <person name="Mohamed A."/>
            <person name="Cheng C.-L."/>
            <person name="Shih M.-C."/>
            <person name="Poulton J.E."/>
            <person name="Esen A."/>
        </authorList>
    </citation>
    <scope>GENE FAMILY</scope>
    <scope>NOMENCLATURE</scope>
</reference>
<reference key="8">
    <citation type="journal article" date="2006" name="Plant J.">
        <title>Arabidopsis myrosinases TGG1 and TGG2 have redundant function in glucosinolate breakdown and insect defense.</title>
        <authorList>
            <person name="Barth C."/>
            <person name="Jander G."/>
        </authorList>
    </citation>
    <scope>FUNCTION</scope>
    <scope>TISSUE SPECIFICITY</scope>
</reference>
<reference key="9">
    <citation type="journal article" date="2007" name="Plant Cell">
        <title>Proteome analysis of Arabidopsis leaf peroxisomes reveals novel targeting peptides, metabolic pathways, and defense mechanisms.</title>
        <authorList>
            <person name="Reumann S."/>
            <person name="Babujee L."/>
            <person name="Ma C."/>
            <person name="Wienkoop S."/>
            <person name="Siemsen T."/>
            <person name="Antonicelli G.E."/>
            <person name="Rasche N."/>
            <person name="Lueder F."/>
            <person name="Weckwerth W."/>
            <person name="Jahn O."/>
        </authorList>
    </citation>
    <scope>IDENTIFICATION BY MASS SPECTROMETRY</scope>
</reference>
<reference key="10">
    <citation type="journal article" date="2009" name="Plant Cell Physiol.">
        <title>Myrosinases, TGG1 and TGG2, redundantly function in ABA and MeJA signaling in Arabidopsis guard cells.</title>
        <authorList>
            <person name="Islam M.M."/>
            <person name="Tani C."/>
            <person name="Watanabe-Sugimoto M."/>
            <person name="Uraji M."/>
            <person name="Jahan M.S."/>
            <person name="Masuda C."/>
            <person name="Nakamura Y."/>
            <person name="Mori I.C."/>
            <person name="Murata Y."/>
        </authorList>
    </citation>
    <scope>FUNCTION</scope>
</reference>
<reference key="11">
    <citation type="journal article" date="2010" name="Plant Physiol.">
        <title>MODIFIED VACUOLE PHENOTYPE1 is an Arabidopsis myrosinase-associated protein involved in endomembrane protein trafficking.</title>
        <authorList>
            <person name="Agee A.E."/>
            <person name="Surpin M."/>
            <person name="Sohn E.J."/>
            <person name="Girke T."/>
            <person name="Rosado A."/>
            <person name="Kram B.W."/>
            <person name="Carter C."/>
            <person name="Wentzell A.M."/>
            <person name="Kliebenstein D.J."/>
            <person name="Jin H.C."/>
            <person name="Park O.K."/>
            <person name="Jin H."/>
            <person name="Hicks G.R."/>
            <person name="Raikhel N.V."/>
        </authorList>
    </citation>
    <scope>INTERACTION WITH MVP1</scope>
</reference>
<comment type="function">
    <text evidence="11 12">May degrade glucosinolates (glucose residue linked by a thioglucoside bound to an amino acid derivative) to glucose, sulfate and any of the products: thiocyanates, isothiocyanates, nitriles, epithionitriles or oxazolidine-2-thiones. These toxic degradation products can deter insect herbivores. Seems to function in abscisic acid (ABA) and methyl jasmonate (MeJA) signaling in guard cells. Functionally redundant with TGG1.</text>
</comment>
<comment type="catalytic activity">
    <reaction>
        <text>a thioglucoside + H2O = a sugar + a thiol.</text>
        <dbReference type="EC" id="3.2.1.147"/>
    </reaction>
</comment>
<comment type="subunit">
    <text evidence="13">Interacts with MVP1.</text>
</comment>
<comment type="alternative products">
    <event type="alternative splicing"/>
    <isoform>
        <id>Q9C5C2-1</id>
        <name>1</name>
        <sequence type="displayed"/>
    </isoform>
    <isoform>
        <id>Q9C5C2-2</id>
        <name>2</name>
        <sequence type="described" ref="VSP_038466"/>
    </isoform>
</comment>
<comment type="tissue specificity">
    <text evidence="11">Expressed in phloem-associated cells.</text>
</comment>
<comment type="miscellaneous">
    <text>It seems that the absence of a catalytic proton donor in plant myrosinases is not impairing the hydrolysis of glucosinolates.</text>
</comment>
<comment type="similarity">
    <text evidence="15">Belongs to the glycosyl hydrolase 1 family.</text>
</comment>
<comment type="sequence caution" evidence="15">
    <conflict type="erroneous initiation">
        <sequence resource="EMBL-CDS" id="AAD40134"/>
    </conflict>
    <text>Truncated N-terminus.</text>
</comment>
<comment type="sequence caution" evidence="15">
    <conflict type="erroneous initiation">
        <sequence resource="EMBL-CDS" id="AAK32833"/>
    </conflict>
    <text>Truncated N-terminus.</text>
</comment>
<comment type="sequence caution" evidence="15">
    <conflict type="frameshift">
        <sequence resource="EMBL-CDS" id="AAN60275"/>
    </conflict>
</comment>
<comment type="sequence caution" evidence="15">
    <conflict type="erroneous initiation">
        <sequence resource="EMBL-CDS" id="BAD94532"/>
    </conflict>
    <text>Truncated N-terminus.</text>
</comment>
<comment type="sequence caution" evidence="15">
    <conflict type="erroneous initiation">
        <sequence resource="EMBL-CDS" id="CAA55787"/>
    </conflict>
    <text>Truncated N-terminus.</text>
</comment>
<name>BGL37_ARATH</name>
<feature type="signal peptide" evidence="8">
    <location>
        <begin position="1"/>
        <end position="28"/>
    </location>
</feature>
<feature type="chain" id="PRO_0000389599" description="Myrosinase 2">
    <location>
        <begin position="29"/>
        <end position="547"/>
    </location>
</feature>
<feature type="active site" description="Nucleophile" evidence="10">
    <location>
        <position position="430"/>
    </location>
</feature>
<feature type="binding site" evidence="4">
    <location>
        <position position="69"/>
    </location>
    <ligand>
        <name>a beta-D-glucoside</name>
        <dbReference type="ChEBI" id="CHEBI:22798"/>
    </ligand>
</feature>
<feature type="binding site" evidence="4">
    <location>
        <position position="171"/>
    </location>
    <ligand>
        <name>a beta-D-glucoside</name>
        <dbReference type="ChEBI" id="CHEBI:22798"/>
    </ligand>
</feature>
<feature type="binding site" evidence="5">
    <location>
        <begin position="216"/>
        <end position="217"/>
    </location>
    <ligand>
        <name>a beta-D-glucoside</name>
        <dbReference type="ChEBI" id="CHEBI:22798"/>
    </ligand>
</feature>
<feature type="binding site" evidence="4">
    <location>
        <position position="359"/>
    </location>
    <ligand>
        <name>a beta-D-glucoside</name>
        <dbReference type="ChEBI" id="CHEBI:22798"/>
    </ligand>
</feature>
<feature type="binding site" evidence="7">
    <location>
        <position position="430"/>
    </location>
    <ligand>
        <name>a beta-D-glucoside</name>
        <dbReference type="ChEBI" id="CHEBI:22798"/>
    </ligand>
</feature>
<feature type="binding site" evidence="4">
    <location>
        <position position="479"/>
    </location>
    <ligand>
        <name>a beta-D-glucoside</name>
        <dbReference type="ChEBI" id="CHEBI:22798"/>
    </ligand>
</feature>
<feature type="binding site" evidence="6">
    <location>
        <begin position="486"/>
        <end position="487"/>
    </location>
    <ligand>
        <name>a beta-D-glucoside</name>
        <dbReference type="ChEBI" id="CHEBI:22798"/>
    </ligand>
</feature>
<feature type="binding site" evidence="2">
    <location>
        <position position="495"/>
    </location>
    <ligand>
        <name>a beta-D-glucoside</name>
        <dbReference type="ChEBI" id="CHEBI:22798"/>
    </ligand>
</feature>
<feature type="glycosylation site" description="N-linked (GlcNAc...) asparagine" evidence="9">
    <location>
        <position position="340"/>
    </location>
</feature>
<feature type="glycosylation site" description="N-linked (GlcNAc...) asparagine" evidence="9">
    <location>
        <position position="384"/>
    </location>
</feature>
<feature type="glycosylation site" description="N-linked (GlcNAc...) asparagine" evidence="9">
    <location>
        <position position="504"/>
    </location>
</feature>
<feature type="disulfide bond" evidence="1">
    <location>
        <begin position="36"/>
        <end position="460"/>
    </location>
</feature>
<feature type="disulfide bond" evidence="1">
    <location>
        <begin position="44"/>
        <end position="456"/>
    </location>
</feature>
<feature type="disulfide bond" evidence="4">
    <location>
        <begin position="236"/>
        <end position="244"/>
    </location>
</feature>
<feature type="splice variant" id="VSP_038466" description="In isoform 2." evidence="15">
    <location>
        <begin position="468"/>
        <end position="547"/>
    </location>
</feature>
<feature type="sequence conflict" description="In Ref. 6; AAN60275." evidence="15" ref="6">
    <original>D</original>
    <variation>N</variation>
    <location>
        <position position="100"/>
    </location>
</feature>
<feature type="sequence conflict" description="In Ref. 6; AAN60275." evidence="15" ref="6">
    <original>E</original>
    <variation>K</variation>
    <location>
        <position position="181"/>
    </location>
</feature>
<feature type="sequence conflict" description="In Ref. 4; AAL77743/AAK32833." evidence="15" ref="4">
    <original>I</original>
    <variation>N</variation>
    <location>
        <position position="255"/>
    </location>
</feature>
<feature type="sequence conflict" description="In Ref. 5; BAE98479." evidence="15" ref="5">
    <original>L</original>
    <variation>P</variation>
    <location>
        <position position="356"/>
    </location>
</feature>
<protein>
    <recommendedName>
        <fullName evidence="3">Myrosinase 2</fullName>
        <ecNumber evidence="3">3.2.1.147</ecNumber>
    </recommendedName>
    <alternativeName>
        <fullName evidence="14">Beta-glucosidase 37</fullName>
        <shortName evidence="14">AtBGLU37</shortName>
    </alternativeName>
    <alternativeName>
        <fullName evidence="3">Sinigrinase 2</fullName>
    </alternativeName>
    <alternativeName>
        <fullName evidence="3">Thioglucosidase 2</fullName>
    </alternativeName>
</protein>
<dbReference type="EC" id="3.2.1.147" evidence="3"/>
<dbReference type="EMBL" id="X79195">
    <property type="protein sequence ID" value="CAA55787.1"/>
    <property type="status" value="ALT_INIT"/>
    <property type="molecule type" value="Genomic_DNA"/>
</dbReference>
<dbReference type="EMBL" id="AF149413">
    <property type="protein sequence ID" value="AAD40134.1"/>
    <property type="status" value="ALT_INIT"/>
    <property type="molecule type" value="Genomic_DNA"/>
</dbReference>
<dbReference type="EMBL" id="CP002688">
    <property type="protein sequence ID" value="AED93507.1"/>
    <property type="molecule type" value="Genomic_DNA"/>
</dbReference>
<dbReference type="EMBL" id="CP002688">
    <property type="protein sequence ID" value="AED93508.1"/>
    <property type="molecule type" value="Genomic_DNA"/>
</dbReference>
<dbReference type="EMBL" id="CP002688">
    <property type="protein sequence ID" value="AED93509.1"/>
    <property type="molecule type" value="Genomic_DNA"/>
</dbReference>
<dbReference type="EMBL" id="AF360348">
    <property type="protein sequence ID" value="AAK28645.1"/>
    <property type="molecule type" value="mRNA"/>
</dbReference>
<dbReference type="EMBL" id="AF361821">
    <property type="protein sequence ID" value="AAK32833.1"/>
    <property type="status" value="ALT_INIT"/>
    <property type="molecule type" value="mRNA"/>
</dbReference>
<dbReference type="EMBL" id="AY078042">
    <property type="protein sequence ID" value="AAL77743.1"/>
    <property type="molecule type" value="mRNA"/>
</dbReference>
<dbReference type="EMBL" id="AY113880">
    <property type="protein sequence ID" value="AAM44928.1"/>
    <property type="molecule type" value="mRNA"/>
</dbReference>
<dbReference type="EMBL" id="AK221048">
    <property type="protein sequence ID" value="BAD94810.1"/>
    <property type="molecule type" value="mRNA"/>
</dbReference>
<dbReference type="EMBL" id="AK221982">
    <property type="protein sequence ID" value="BAD94532.1"/>
    <property type="status" value="ALT_INIT"/>
    <property type="molecule type" value="mRNA"/>
</dbReference>
<dbReference type="EMBL" id="AK226328">
    <property type="protein sequence ID" value="BAE98479.1"/>
    <property type="molecule type" value="mRNA"/>
</dbReference>
<dbReference type="EMBL" id="AF083717">
    <property type="protein sequence ID" value="AAN60275.1"/>
    <property type="status" value="ALT_SEQ"/>
    <property type="molecule type" value="mRNA"/>
</dbReference>
<dbReference type="PIR" id="S56654">
    <property type="entry name" value="S56654"/>
</dbReference>
<dbReference type="RefSeq" id="NP_001031940.1">
    <molecule id="Q9C5C2-2"/>
    <property type="nucleotide sequence ID" value="NM_001036863.1"/>
</dbReference>
<dbReference type="RefSeq" id="NP_568479.1">
    <molecule id="Q9C5C2-1"/>
    <property type="nucleotide sequence ID" value="NM_122499.4"/>
</dbReference>
<dbReference type="RefSeq" id="NP_851076.2">
    <molecule id="Q9C5C2-2"/>
    <property type="nucleotide sequence ID" value="NM_180745.2"/>
</dbReference>
<dbReference type="SMR" id="Q9C5C2"/>
<dbReference type="BioGRID" id="17942">
    <property type="interactions" value="8"/>
</dbReference>
<dbReference type="FunCoup" id="Q9C5C2">
    <property type="interactions" value="13"/>
</dbReference>
<dbReference type="STRING" id="3702.Q9C5C2"/>
<dbReference type="CAZy" id="GH1">
    <property type="family name" value="Glycoside Hydrolase Family 1"/>
</dbReference>
<dbReference type="GlyCosmos" id="Q9C5C2">
    <property type="glycosylation" value="3 sites, No reported glycans"/>
</dbReference>
<dbReference type="GlyGen" id="Q9C5C2">
    <property type="glycosylation" value="3 sites"/>
</dbReference>
<dbReference type="MetOSite" id="Q9C5C2"/>
<dbReference type="PaxDb" id="3702-AT5G25980.2"/>
<dbReference type="ProteomicsDB" id="240621">
    <molecule id="Q9C5C2-1"/>
</dbReference>
<dbReference type="EnsemblPlants" id="AT5G25980.1">
    <molecule id="Q9C5C2-2"/>
    <property type="protein sequence ID" value="AT5G25980.1"/>
    <property type="gene ID" value="AT5G25980"/>
</dbReference>
<dbReference type="EnsemblPlants" id="AT5G25980.2">
    <molecule id="Q9C5C2-1"/>
    <property type="protein sequence ID" value="AT5G25980.2"/>
    <property type="gene ID" value="AT5G25980"/>
</dbReference>
<dbReference type="EnsemblPlants" id="AT5G25980.3">
    <molecule id="Q9C5C2-2"/>
    <property type="protein sequence ID" value="AT5G25980.3"/>
    <property type="gene ID" value="AT5G25980"/>
</dbReference>
<dbReference type="GeneID" id="832667"/>
<dbReference type="Gramene" id="AT5G25980.1">
    <molecule id="Q9C5C2-2"/>
    <property type="protein sequence ID" value="AT5G25980.1"/>
    <property type="gene ID" value="AT5G25980"/>
</dbReference>
<dbReference type="Gramene" id="AT5G25980.2">
    <molecule id="Q9C5C2-1"/>
    <property type="protein sequence ID" value="AT5G25980.2"/>
    <property type="gene ID" value="AT5G25980"/>
</dbReference>
<dbReference type="Gramene" id="AT5G25980.3">
    <molecule id="Q9C5C2-2"/>
    <property type="protein sequence ID" value="AT5G25980.3"/>
    <property type="gene ID" value="AT5G25980"/>
</dbReference>
<dbReference type="KEGG" id="ath:AT5G25980"/>
<dbReference type="Araport" id="AT5G25980"/>
<dbReference type="TAIR" id="AT5G25980">
    <property type="gene designation" value="TGG2"/>
</dbReference>
<dbReference type="eggNOG" id="KOG0626">
    <property type="taxonomic scope" value="Eukaryota"/>
</dbReference>
<dbReference type="HOGENOM" id="CLU_001859_1_0_1"/>
<dbReference type="InParanoid" id="Q9C5C2"/>
<dbReference type="OMA" id="YEFCNGY"/>
<dbReference type="PhylomeDB" id="Q9C5C2"/>
<dbReference type="BioCyc" id="MetaCyc:AT5G25980-MONOMER"/>
<dbReference type="BRENDA" id="3.2.1.147">
    <property type="organism ID" value="399"/>
</dbReference>
<dbReference type="CD-CODE" id="4299E36E">
    <property type="entry name" value="Nucleolus"/>
</dbReference>
<dbReference type="PRO" id="PR:Q9C5C2"/>
<dbReference type="Proteomes" id="UP000006548">
    <property type="component" value="Chromosome 5"/>
</dbReference>
<dbReference type="ExpressionAtlas" id="Q9C5C2">
    <property type="expression patterns" value="baseline and differential"/>
</dbReference>
<dbReference type="GO" id="GO:0048046">
    <property type="term" value="C:apoplast"/>
    <property type="evidence" value="ECO:0007005"/>
    <property type="project" value="TAIR"/>
</dbReference>
<dbReference type="GO" id="GO:0009507">
    <property type="term" value="C:chloroplast"/>
    <property type="evidence" value="ECO:0007005"/>
    <property type="project" value="TAIR"/>
</dbReference>
<dbReference type="GO" id="GO:0022626">
    <property type="term" value="C:cytosolic ribosome"/>
    <property type="evidence" value="ECO:0007005"/>
    <property type="project" value="TAIR"/>
</dbReference>
<dbReference type="GO" id="GO:0005777">
    <property type="term" value="C:peroxisome"/>
    <property type="evidence" value="ECO:0007005"/>
    <property type="project" value="TAIR"/>
</dbReference>
<dbReference type="GO" id="GO:0000325">
    <property type="term" value="C:plant-type vacuole"/>
    <property type="evidence" value="ECO:0007005"/>
    <property type="project" value="TAIR"/>
</dbReference>
<dbReference type="GO" id="GO:0009506">
    <property type="term" value="C:plasmodesma"/>
    <property type="evidence" value="ECO:0007005"/>
    <property type="project" value="TAIR"/>
</dbReference>
<dbReference type="GO" id="GO:0009536">
    <property type="term" value="C:plastid"/>
    <property type="evidence" value="ECO:0007005"/>
    <property type="project" value="TAIR"/>
</dbReference>
<dbReference type="GO" id="GO:0099503">
    <property type="term" value="C:secretory vesicle"/>
    <property type="evidence" value="ECO:0007005"/>
    <property type="project" value="TAIR"/>
</dbReference>
<dbReference type="GO" id="GO:0019137">
    <property type="term" value="F:thioglucosidase activity"/>
    <property type="evidence" value="ECO:0000315"/>
    <property type="project" value="TAIR"/>
</dbReference>
<dbReference type="GO" id="GO:0009738">
    <property type="term" value="P:abscisic acid-activated signaling pathway"/>
    <property type="evidence" value="ECO:0007669"/>
    <property type="project" value="UniProtKB-KW"/>
</dbReference>
<dbReference type="GO" id="GO:0005975">
    <property type="term" value="P:carbohydrate metabolic process"/>
    <property type="evidence" value="ECO:0007669"/>
    <property type="project" value="InterPro"/>
</dbReference>
<dbReference type="GO" id="GO:0002213">
    <property type="term" value="P:defense response to insect"/>
    <property type="evidence" value="ECO:0000315"/>
    <property type="project" value="UniProtKB"/>
</dbReference>
<dbReference type="GO" id="GO:0019762">
    <property type="term" value="P:glucosinolate catabolic process"/>
    <property type="evidence" value="ECO:0000315"/>
    <property type="project" value="TAIR"/>
</dbReference>
<dbReference type="GO" id="GO:0010119">
    <property type="term" value="P:regulation of stomatal movement"/>
    <property type="evidence" value="ECO:0000315"/>
    <property type="project" value="UniProtKB"/>
</dbReference>
<dbReference type="GO" id="GO:0009737">
    <property type="term" value="P:response to abscisic acid"/>
    <property type="evidence" value="ECO:0000315"/>
    <property type="project" value="UniProtKB"/>
</dbReference>
<dbReference type="FunFam" id="3.20.20.80:FF:000041">
    <property type="entry name" value="Beta-glucosidase 7"/>
    <property type="match status" value="1"/>
</dbReference>
<dbReference type="Gene3D" id="3.20.20.80">
    <property type="entry name" value="Glycosidases"/>
    <property type="match status" value="1"/>
</dbReference>
<dbReference type="InterPro" id="IPR001360">
    <property type="entry name" value="Glyco_hydro_1"/>
</dbReference>
<dbReference type="InterPro" id="IPR018120">
    <property type="entry name" value="Glyco_hydro_1_AS"/>
</dbReference>
<dbReference type="InterPro" id="IPR033132">
    <property type="entry name" value="Glyco_hydro_1_N_CS"/>
</dbReference>
<dbReference type="InterPro" id="IPR017853">
    <property type="entry name" value="Glycoside_hydrolase_SF"/>
</dbReference>
<dbReference type="PANTHER" id="PTHR10353">
    <property type="entry name" value="GLYCOSYL HYDROLASE"/>
    <property type="match status" value="1"/>
</dbReference>
<dbReference type="PANTHER" id="PTHR10353:SF218">
    <property type="entry name" value="MYROSINASE 1-RELATED"/>
    <property type="match status" value="1"/>
</dbReference>
<dbReference type="Pfam" id="PF00232">
    <property type="entry name" value="Glyco_hydro_1"/>
    <property type="match status" value="1"/>
</dbReference>
<dbReference type="PRINTS" id="PR00131">
    <property type="entry name" value="GLHYDRLASE1"/>
</dbReference>
<dbReference type="SUPFAM" id="SSF51445">
    <property type="entry name" value="(Trans)glycosidases"/>
    <property type="match status" value="1"/>
</dbReference>
<dbReference type="PROSITE" id="PS00572">
    <property type="entry name" value="GLYCOSYL_HYDROL_F1_1"/>
    <property type="match status" value="1"/>
</dbReference>
<dbReference type="PROSITE" id="PS00653">
    <property type="entry name" value="GLYCOSYL_HYDROL_F1_2"/>
    <property type="match status" value="1"/>
</dbReference>
<organism>
    <name type="scientific">Arabidopsis thaliana</name>
    <name type="common">Mouse-ear cress</name>
    <dbReference type="NCBI Taxonomy" id="3702"/>
    <lineage>
        <taxon>Eukaryota</taxon>
        <taxon>Viridiplantae</taxon>
        <taxon>Streptophyta</taxon>
        <taxon>Embryophyta</taxon>
        <taxon>Tracheophyta</taxon>
        <taxon>Spermatophyta</taxon>
        <taxon>Magnoliopsida</taxon>
        <taxon>eudicotyledons</taxon>
        <taxon>Gunneridae</taxon>
        <taxon>Pentapetalae</taxon>
        <taxon>rosids</taxon>
        <taxon>malvids</taxon>
        <taxon>Brassicales</taxon>
        <taxon>Brassicaceae</taxon>
        <taxon>Camelineae</taxon>
        <taxon>Arabidopsis</taxon>
    </lineage>
</organism>
<proteinExistence type="evidence at protein level"/>
<keyword id="KW-0938">Abscisic acid signaling pathway</keyword>
<keyword id="KW-0025">Alternative splicing</keyword>
<keyword id="KW-1015">Disulfide bond</keyword>
<keyword id="KW-0325">Glycoprotein</keyword>
<keyword id="KW-0326">Glycosidase</keyword>
<keyword id="KW-0378">Hydrolase</keyword>
<keyword id="KW-0611">Plant defense</keyword>
<keyword id="KW-1185">Reference proteome</keyword>
<keyword id="KW-0732">Signal</keyword>
<sequence>MQHNTYIYILTMKLLGFALAILLVVATCKPEEEITCEENVPFTCSQTDRFNKQDFESDFIFGVASSAYQIEGGRGRGLNVWDGFTHRYPEKGGADLGNGDTTCDSYRTWQKDLDVMEELGVKGYRFSFAWSRILPKGKRSRGINEDGINYYSGLIDGLIARNITPFVTLFHWDLPQSLQDEYEGFLDRTIIDDFKDYADLCFERFGDRVKHWITINQLFTVPTRGYALGTDAPGRCSQWVDKRCYGGDSSTEPYIVAHNQLLAHATVVDLYRTRYKYQGGKIGPVMITRWFLPYDDTLESKQATWRAKEFFLGWFMEPLTKGKYPYIMRKLVGNRLPKFNSTEARLLKGSYDFLGLNYYVTQYAHALDPSPPEKLTAMTDSLANLTSLDANGQPPGPPFSKGSYYHPRGMLNVMEHFKTKYGDPLIYVTENGFSTSGGPIPFTEAFHDYNRIDYLCSHLCFLRKAIKEKRVNVKGYFVWSLGDNYEFCNGYTVRFGLSYVDFNNVTADRDLKASGLWYQSFLRDTTKNQDILRSSLPFKNGDRKSLT</sequence>
<evidence type="ECO:0000250" key="1"/>
<evidence type="ECO:0000250" key="2">
    <source>
        <dbReference type="UniProtKB" id="Q1XH05"/>
    </source>
</evidence>
<evidence type="ECO:0000250" key="3">
    <source>
        <dbReference type="UniProtKB" id="Q3ECS3"/>
    </source>
</evidence>
<evidence type="ECO:0000250" key="4">
    <source>
        <dbReference type="UniProtKB" id="Q7XSK0"/>
    </source>
</evidence>
<evidence type="ECO:0000250" key="5">
    <source>
        <dbReference type="UniProtKB" id="Q8GU20"/>
    </source>
</evidence>
<evidence type="ECO:0000250" key="6">
    <source>
        <dbReference type="UniProtKB" id="Q8L7J2"/>
    </source>
</evidence>
<evidence type="ECO:0000250" key="7">
    <source>
        <dbReference type="UniProtKB" id="Q9SPP9"/>
    </source>
</evidence>
<evidence type="ECO:0000255" key="8"/>
<evidence type="ECO:0000255" key="9">
    <source>
        <dbReference type="PROSITE-ProRule" id="PRU00498"/>
    </source>
</evidence>
<evidence type="ECO:0000255" key="10">
    <source>
        <dbReference type="PROSITE-ProRule" id="PRU10055"/>
    </source>
</evidence>
<evidence type="ECO:0000269" key="11">
    <source>
    </source>
</evidence>
<evidence type="ECO:0000269" key="12">
    <source>
    </source>
</evidence>
<evidence type="ECO:0000269" key="13">
    <source>
    </source>
</evidence>
<evidence type="ECO:0000303" key="14">
    <source>
    </source>
</evidence>
<evidence type="ECO:0000305" key="15"/>
<evidence type="ECO:0000312" key="16">
    <source>
        <dbReference type="Araport" id="AT5G25980"/>
    </source>
</evidence>
<evidence type="ECO:0000312" key="17">
    <source>
        <dbReference type="EMBL" id="AAD40134.1"/>
    </source>
</evidence>